<gene>
    <name type="ordered locus">At3g10430</name>
    <name type="ORF">F13M14.29</name>
    <name type="ORF">F18K10.1</name>
</gene>
<reference key="1">
    <citation type="journal article" date="2000" name="Nature">
        <title>Sequence and analysis of chromosome 3 of the plant Arabidopsis thaliana.</title>
        <authorList>
            <person name="Salanoubat M."/>
            <person name="Lemcke K."/>
            <person name="Rieger M."/>
            <person name="Ansorge W."/>
            <person name="Unseld M."/>
            <person name="Fartmann B."/>
            <person name="Valle G."/>
            <person name="Bloecker H."/>
            <person name="Perez-Alonso M."/>
            <person name="Obermaier B."/>
            <person name="Delseny M."/>
            <person name="Boutry M."/>
            <person name="Grivell L.A."/>
            <person name="Mache R."/>
            <person name="Puigdomenech P."/>
            <person name="De Simone V."/>
            <person name="Choisne N."/>
            <person name="Artiguenave F."/>
            <person name="Robert C."/>
            <person name="Brottier P."/>
            <person name="Wincker P."/>
            <person name="Cattolico L."/>
            <person name="Weissenbach J."/>
            <person name="Saurin W."/>
            <person name="Quetier F."/>
            <person name="Schaefer M."/>
            <person name="Mueller-Auer S."/>
            <person name="Gabel C."/>
            <person name="Fuchs M."/>
            <person name="Benes V."/>
            <person name="Wurmbach E."/>
            <person name="Drzonek H."/>
            <person name="Erfle H."/>
            <person name="Jordan N."/>
            <person name="Bangert S."/>
            <person name="Wiedelmann R."/>
            <person name="Kranz H."/>
            <person name="Voss H."/>
            <person name="Holland R."/>
            <person name="Brandt P."/>
            <person name="Nyakatura G."/>
            <person name="Vezzi A."/>
            <person name="D'Angelo M."/>
            <person name="Pallavicini A."/>
            <person name="Toppo S."/>
            <person name="Simionati B."/>
            <person name="Conrad A."/>
            <person name="Hornischer K."/>
            <person name="Kauer G."/>
            <person name="Loehnert T.-H."/>
            <person name="Nordsiek G."/>
            <person name="Reichelt J."/>
            <person name="Scharfe M."/>
            <person name="Schoen O."/>
            <person name="Bargues M."/>
            <person name="Terol J."/>
            <person name="Climent J."/>
            <person name="Navarro P."/>
            <person name="Collado C."/>
            <person name="Perez-Perez A."/>
            <person name="Ottenwaelder B."/>
            <person name="Duchemin D."/>
            <person name="Cooke R."/>
            <person name="Laudie M."/>
            <person name="Berger-Llauro C."/>
            <person name="Purnelle B."/>
            <person name="Masuy D."/>
            <person name="de Haan M."/>
            <person name="Maarse A.C."/>
            <person name="Alcaraz J.-P."/>
            <person name="Cottet A."/>
            <person name="Casacuberta E."/>
            <person name="Monfort A."/>
            <person name="Argiriou A."/>
            <person name="Flores M."/>
            <person name="Liguori R."/>
            <person name="Vitale D."/>
            <person name="Mannhaupt G."/>
            <person name="Haase D."/>
            <person name="Schoof H."/>
            <person name="Rudd S."/>
            <person name="Zaccaria P."/>
            <person name="Mewes H.-W."/>
            <person name="Mayer K.F.X."/>
            <person name="Kaul S."/>
            <person name="Town C.D."/>
            <person name="Koo H.L."/>
            <person name="Tallon L.J."/>
            <person name="Jenkins J."/>
            <person name="Rooney T."/>
            <person name="Rizzo M."/>
            <person name="Walts A."/>
            <person name="Utterback T."/>
            <person name="Fujii C.Y."/>
            <person name="Shea T.P."/>
            <person name="Creasy T.H."/>
            <person name="Haas B."/>
            <person name="Maiti R."/>
            <person name="Wu D."/>
            <person name="Peterson J."/>
            <person name="Van Aken S."/>
            <person name="Pai G."/>
            <person name="Militscher J."/>
            <person name="Sellers P."/>
            <person name="Gill J.E."/>
            <person name="Feldblyum T.V."/>
            <person name="Preuss D."/>
            <person name="Lin X."/>
            <person name="Nierman W.C."/>
            <person name="Salzberg S.L."/>
            <person name="White O."/>
            <person name="Venter J.C."/>
            <person name="Fraser C.M."/>
            <person name="Kaneko T."/>
            <person name="Nakamura Y."/>
            <person name="Sato S."/>
            <person name="Kato T."/>
            <person name="Asamizu E."/>
            <person name="Sasamoto S."/>
            <person name="Kimura T."/>
            <person name="Idesawa K."/>
            <person name="Kawashima K."/>
            <person name="Kishida Y."/>
            <person name="Kiyokawa C."/>
            <person name="Kohara M."/>
            <person name="Matsumoto M."/>
            <person name="Matsuno A."/>
            <person name="Muraki A."/>
            <person name="Nakayama S."/>
            <person name="Nakazaki N."/>
            <person name="Shinpo S."/>
            <person name="Takeuchi C."/>
            <person name="Wada T."/>
            <person name="Watanabe A."/>
            <person name="Yamada M."/>
            <person name="Yasuda M."/>
            <person name="Tabata S."/>
        </authorList>
    </citation>
    <scope>NUCLEOTIDE SEQUENCE [LARGE SCALE GENOMIC DNA]</scope>
    <source>
        <strain>cv. Columbia</strain>
    </source>
</reference>
<reference key="2">
    <citation type="journal article" date="2017" name="Plant J.">
        <title>Araport11: a complete reannotation of the Arabidopsis thaliana reference genome.</title>
        <authorList>
            <person name="Cheng C.Y."/>
            <person name="Krishnakumar V."/>
            <person name="Chan A.P."/>
            <person name="Thibaud-Nissen F."/>
            <person name="Schobel S."/>
            <person name="Town C.D."/>
        </authorList>
    </citation>
    <scope>GENOME REANNOTATION</scope>
    <source>
        <strain>cv. Columbia</strain>
    </source>
</reference>
<name>FB138_ARATH</name>
<accession>Q9CAE7</accession>
<accession>Q9LPP6</accession>
<dbReference type="EMBL" id="AC011560">
    <property type="protein sequence ID" value="AAG51379.1"/>
    <property type="molecule type" value="Genomic_DNA"/>
</dbReference>
<dbReference type="EMBL" id="AC013428">
    <property type="protein sequence ID" value="AAF76374.1"/>
    <property type="molecule type" value="Genomic_DNA"/>
</dbReference>
<dbReference type="EMBL" id="CP002686">
    <property type="protein sequence ID" value="AEE74905.1"/>
    <property type="molecule type" value="Genomic_DNA"/>
</dbReference>
<dbReference type="RefSeq" id="NP_187654.1">
    <property type="nucleotide sequence ID" value="NM_111878.1"/>
</dbReference>
<dbReference type="SMR" id="Q9CAE7"/>
<dbReference type="BioGRID" id="5541">
    <property type="interactions" value="2"/>
</dbReference>
<dbReference type="FunCoup" id="Q9CAE7">
    <property type="interactions" value="2"/>
</dbReference>
<dbReference type="STRING" id="3702.Q9CAE7"/>
<dbReference type="iPTMnet" id="Q9CAE7"/>
<dbReference type="PaxDb" id="3702-AT3G10430.1"/>
<dbReference type="EnsemblPlants" id="AT3G10430.1">
    <property type="protein sequence ID" value="AT3G10430.1"/>
    <property type="gene ID" value="AT3G10430"/>
</dbReference>
<dbReference type="GeneID" id="820207"/>
<dbReference type="Gramene" id="AT3G10430.1">
    <property type="protein sequence ID" value="AT3G10430.1"/>
    <property type="gene ID" value="AT3G10430"/>
</dbReference>
<dbReference type="KEGG" id="ath:AT3G10430"/>
<dbReference type="Araport" id="AT3G10430"/>
<dbReference type="TAIR" id="AT3G10430"/>
<dbReference type="eggNOG" id="ENOG502T2DW">
    <property type="taxonomic scope" value="Eukaryota"/>
</dbReference>
<dbReference type="HOGENOM" id="CLU_034692_2_0_1"/>
<dbReference type="InParanoid" id="Q9CAE7"/>
<dbReference type="OMA" id="NIIAWCE"/>
<dbReference type="OrthoDB" id="1023818at2759"/>
<dbReference type="PhylomeDB" id="Q9CAE7"/>
<dbReference type="PRO" id="PR:Q9CAE7"/>
<dbReference type="Proteomes" id="UP000006548">
    <property type="component" value="Chromosome 3"/>
</dbReference>
<dbReference type="ExpressionAtlas" id="Q9CAE7">
    <property type="expression patterns" value="baseline and differential"/>
</dbReference>
<dbReference type="CDD" id="cd22157">
    <property type="entry name" value="F-box_AtFBW1-like"/>
    <property type="match status" value="1"/>
</dbReference>
<dbReference type="Gene3D" id="1.20.1280.50">
    <property type="match status" value="1"/>
</dbReference>
<dbReference type="InterPro" id="IPR006527">
    <property type="entry name" value="F-box-assoc_dom_typ1"/>
</dbReference>
<dbReference type="InterPro" id="IPR017451">
    <property type="entry name" value="F-box-assoc_interact_dom"/>
</dbReference>
<dbReference type="InterPro" id="IPR036047">
    <property type="entry name" value="F-box-like_dom_sf"/>
</dbReference>
<dbReference type="InterPro" id="IPR001810">
    <property type="entry name" value="F-box_dom"/>
</dbReference>
<dbReference type="InterPro" id="IPR050796">
    <property type="entry name" value="SCF_F-box_component"/>
</dbReference>
<dbReference type="NCBIfam" id="TIGR01640">
    <property type="entry name" value="F_box_assoc_1"/>
    <property type="match status" value="1"/>
</dbReference>
<dbReference type="PANTHER" id="PTHR31672">
    <property type="entry name" value="BNACNNG10540D PROTEIN"/>
    <property type="match status" value="1"/>
</dbReference>
<dbReference type="PANTHER" id="PTHR31672:SF13">
    <property type="entry name" value="F-BOX PROTEIN CPR30-LIKE"/>
    <property type="match status" value="1"/>
</dbReference>
<dbReference type="Pfam" id="PF00646">
    <property type="entry name" value="F-box"/>
    <property type="match status" value="1"/>
</dbReference>
<dbReference type="Pfam" id="PF07734">
    <property type="entry name" value="FBA_1"/>
    <property type="match status" value="1"/>
</dbReference>
<dbReference type="SMART" id="SM00256">
    <property type="entry name" value="FBOX"/>
    <property type="match status" value="1"/>
</dbReference>
<dbReference type="SUPFAM" id="SSF81383">
    <property type="entry name" value="F-box domain"/>
    <property type="match status" value="1"/>
</dbReference>
<dbReference type="PROSITE" id="PS50181">
    <property type="entry name" value="FBOX"/>
    <property type="match status" value="1"/>
</dbReference>
<keyword id="KW-1185">Reference proteome</keyword>
<feature type="chain" id="PRO_0000283409" description="Putative F-box protein At3g10430">
    <location>
        <begin position="1"/>
        <end position="370"/>
    </location>
</feature>
<feature type="domain" description="F-box" evidence="1">
    <location>
        <begin position="1"/>
        <end position="47"/>
    </location>
</feature>
<proteinExistence type="predicted"/>
<protein>
    <recommendedName>
        <fullName>Putative F-box protein At3g10430</fullName>
    </recommendedName>
</protein>
<sequence>MGSSLPFDLILEILQRTPAESLLRFKSTCKKWYELISNDKRFMYKHLDKSTKRFLRIENRERVQILDPVTEILAVSTIPNELRHKYFTLIHCDGLMLGMCYEELGSDPNLAVWNPVMRKIKWIKPSPPLVCYWGSDYLGFGYDKTFRDNYKILRFTYLGDDDDDESYPKCQIYEFNSGSWRSIEAKFDGEIDVEVDGVSVNGSMYWIELQEKKNFILSFDFSKETFNRICDSPLYWDIKRLGCFNGDRLSLLQQNEATREIHVSVTNKLSDEVVSFSRYFSVTLPDIPLFRSIDILPLPGCFIGKNRNIIAWCEQLVGKYDDHTSIILYEIGEGGVTKRIRTGRHEADEDYNDLDNCSYVYVPSLIPVPE</sequence>
<evidence type="ECO:0000255" key="1">
    <source>
        <dbReference type="PROSITE-ProRule" id="PRU00080"/>
    </source>
</evidence>
<organism>
    <name type="scientific">Arabidopsis thaliana</name>
    <name type="common">Mouse-ear cress</name>
    <dbReference type="NCBI Taxonomy" id="3702"/>
    <lineage>
        <taxon>Eukaryota</taxon>
        <taxon>Viridiplantae</taxon>
        <taxon>Streptophyta</taxon>
        <taxon>Embryophyta</taxon>
        <taxon>Tracheophyta</taxon>
        <taxon>Spermatophyta</taxon>
        <taxon>Magnoliopsida</taxon>
        <taxon>eudicotyledons</taxon>
        <taxon>Gunneridae</taxon>
        <taxon>Pentapetalae</taxon>
        <taxon>rosids</taxon>
        <taxon>malvids</taxon>
        <taxon>Brassicales</taxon>
        <taxon>Brassicaceae</taxon>
        <taxon>Camelineae</taxon>
        <taxon>Arabidopsis</taxon>
    </lineage>
</organism>